<sequence length="433" mass="50073">MKKYLLYMVQVHLNFRRAELESLADLYNLSIDFSQYDANSPFFIVELENDQQAKDWIKRSILTRGIYEYWGQGTTLDELHKDIQRQSNFEQDLQLKFKHSTFKFEFECYKGNSKAKRVEQIETFRYLGFEGKIDMKHPQEVFTVIEEYTPISENVGGKTPTRIYFGRQVQMSNRSAMEKYDLKKRPYKGTTSFEAELSLVSANIAQVKPGTIMYDPFAGTGSFLVAGGHFGSLVIGSDIDGRMIRGKGAQVNISANFKKYGESSQFLDVLTMDFTNNALRNNLVIDTILCDPPYGIRESIKVLGAKDPERFLGKEDMEIDGEKAYLRRDYIPTKKPYALDSLLDDLLQYSSERLPIGGRLAFWMPTANDANIETIVPMHENLELKYNCVQEFNKWSRRLLVYINRGSTFNGSSNHGIKRSKDNFRERYFNNFN</sequence>
<keyword id="KW-0963">Cytoplasm</keyword>
<keyword id="KW-0489">Methyltransferase</keyword>
<keyword id="KW-1185">Reference proteome</keyword>
<keyword id="KW-0694">RNA-binding</keyword>
<keyword id="KW-0949">S-adenosyl-L-methionine</keyword>
<keyword id="KW-0808">Transferase</keyword>
<keyword id="KW-0819">tRNA processing</keyword>
<keyword id="KW-0820">tRNA-binding</keyword>
<dbReference type="EC" id="2.1.1.214" evidence="4"/>
<dbReference type="EMBL" id="U41293">
    <property type="protein sequence ID" value="AAC49469.1"/>
    <property type="molecule type" value="Genomic_DNA"/>
</dbReference>
<dbReference type="EMBL" id="Z74866">
    <property type="protein sequence ID" value="CAA99143.1"/>
    <property type="molecule type" value="Genomic_DNA"/>
</dbReference>
<dbReference type="EMBL" id="BK006948">
    <property type="protein sequence ID" value="DAA10660.1"/>
    <property type="molecule type" value="Genomic_DNA"/>
</dbReference>
<dbReference type="PIR" id="S63447">
    <property type="entry name" value="S63447"/>
</dbReference>
<dbReference type="RefSeq" id="NP_014517.1">
    <property type="nucleotide sequence ID" value="NM_001183378.1"/>
</dbReference>
<dbReference type="SMR" id="Q12463"/>
<dbReference type="BioGRID" id="34251">
    <property type="interactions" value="185"/>
</dbReference>
<dbReference type="ComplexPortal" id="CPX-778">
    <property type="entry name" value="TRM11-TRM112 tRNA (m2G10) methyltransferase complex"/>
</dbReference>
<dbReference type="DIP" id="DIP-6751N"/>
<dbReference type="FunCoup" id="Q12463">
    <property type="interactions" value="991"/>
</dbReference>
<dbReference type="IntAct" id="Q12463">
    <property type="interactions" value="2"/>
</dbReference>
<dbReference type="MINT" id="Q12463"/>
<dbReference type="STRING" id="4932.YOL124C"/>
<dbReference type="PaxDb" id="4932-YOL124C"/>
<dbReference type="PeptideAtlas" id="Q12463"/>
<dbReference type="EnsemblFungi" id="YOL124C_mRNA">
    <property type="protein sequence ID" value="YOL124C"/>
    <property type="gene ID" value="YOL124C"/>
</dbReference>
<dbReference type="GeneID" id="853996"/>
<dbReference type="KEGG" id="sce:YOL124C"/>
<dbReference type="AGR" id="SGD:S000005484"/>
<dbReference type="SGD" id="S000005484">
    <property type="gene designation" value="TRM11"/>
</dbReference>
<dbReference type="VEuPathDB" id="FungiDB:YOL124C"/>
<dbReference type="eggNOG" id="KOG2671">
    <property type="taxonomic scope" value="Eukaryota"/>
</dbReference>
<dbReference type="GeneTree" id="ENSGT00390000018131"/>
<dbReference type="HOGENOM" id="CLU_029646_3_0_1"/>
<dbReference type="InParanoid" id="Q12463"/>
<dbReference type="OMA" id="AFNKWSR"/>
<dbReference type="OrthoDB" id="296065at2759"/>
<dbReference type="BioCyc" id="MetaCyc:G3O-33520-MONOMER"/>
<dbReference type="BioCyc" id="YEAST:G3O-33520-MONOMER"/>
<dbReference type="BRENDA" id="2.1.1.214">
    <property type="organism ID" value="984"/>
</dbReference>
<dbReference type="BioGRID-ORCS" id="853996">
    <property type="hits" value="7 hits in 10 CRISPR screens"/>
</dbReference>
<dbReference type="PRO" id="PR:Q12463"/>
<dbReference type="Proteomes" id="UP000002311">
    <property type="component" value="Chromosome XV"/>
</dbReference>
<dbReference type="RNAct" id="Q12463">
    <property type="molecule type" value="protein"/>
</dbReference>
<dbReference type="GO" id="GO:0005737">
    <property type="term" value="C:cytoplasm"/>
    <property type="evidence" value="ECO:0000314"/>
    <property type="project" value="SGD"/>
</dbReference>
<dbReference type="GO" id="GO:0005829">
    <property type="term" value="C:cytosol"/>
    <property type="evidence" value="ECO:0000304"/>
    <property type="project" value="Reactome"/>
</dbReference>
<dbReference type="GO" id="GO:0043528">
    <property type="term" value="C:tRNA (m2G10) methyltransferase complex"/>
    <property type="evidence" value="ECO:0000353"/>
    <property type="project" value="ComplexPortal"/>
</dbReference>
<dbReference type="GO" id="GO:0008168">
    <property type="term" value="F:methyltransferase activity"/>
    <property type="evidence" value="ECO:0000318"/>
    <property type="project" value="GO_Central"/>
</dbReference>
<dbReference type="GO" id="GO:0160102">
    <property type="term" value="F:tRNA (guanine(10)-N2)-methyltransferase activity"/>
    <property type="evidence" value="ECO:0000314"/>
    <property type="project" value="SGD"/>
</dbReference>
<dbReference type="GO" id="GO:0000049">
    <property type="term" value="F:tRNA binding"/>
    <property type="evidence" value="ECO:0007669"/>
    <property type="project" value="UniProtKB-KW"/>
</dbReference>
<dbReference type="GO" id="GO:0030488">
    <property type="term" value="P:tRNA methylation"/>
    <property type="evidence" value="ECO:0000314"/>
    <property type="project" value="ComplexPortal"/>
</dbReference>
<dbReference type="GO" id="GO:0006400">
    <property type="term" value="P:tRNA modification"/>
    <property type="evidence" value="ECO:0000304"/>
    <property type="project" value="Reactome"/>
</dbReference>
<dbReference type="FunFam" id="3.40.50.150:FF:000260">
    <property type="entry name" value="RNA methylase family protein"/>
    <property type="match status" value="1"/>
</dbReference>
<dbReference type="Gene3D" id="3.40.50.150">
    <property type="entry name" value="Vaccinia Virus protein VP39"/>
    <property type="match status" value="1"/>
</dbReference>
<dbReference type="InterPro" id="IPR002052">
    <property type="entry name" value="DNA_methylase_N6_adenine_CS"/>
</dbReference>
<dbReference type="InterPro" id="IPR000241">
    <property type="entry name" value="RlmKL-like_Mtase"/>
</dbReference>
<dbReference type="InterPro" id="IPR029063">
    <property type="entry name" value="SAM-dependent_MTases_sf"/>
</dbReference>
<dbReference type="InterPro" id="IPR016691">
    <property type="entry name" value="tRNA_mtfrase_TRM11"/>
</dbReference>
<dbReference type="PANTHER" id="PTHR13370">
    <property type="entry name" value="RNA METHYLASE-RELATED"/>
    <property type="match status" value="1"/>
</dbReference>
<dbReference type="PANTHER" id="PTHR13370:SF3">
    <property type="entry name" value="TRNA (GUANINE(10)-N2)-METHYLTRANSFERASE HOMOLOG"/>
    <property type="match status" value="1"/>
</dbReference>
<dbReference type="Pfam" id="PF01170">
    <property type="entry name" value="UPF0020"/>
    <property type="match status" value="1"/>
</dbReference>
<dbReference type="PIRSF" id="PIRSF017259">
    <property type="entry name" value="tRNA_mtfrase_TRM11"/>
    <property type="match status" value="1"/>
</dbReference>
<dbReference type="PRINTS" id="PR00507">
    <property type="entry name" value="N12N6MTFRASE"/>
</dbReference>
<dbReference type="SUPFAM" id="SSF53335">
    <property type="entry name" value="S-adenosyl-L-methionine-dependent methyltransferases"/>
    <property type="match status" value="1"/>
</dbReference>
<dbReference type="PROSITE" id="PS00092">
    <property type="entry name" value="N6_MTASE"/>
    <property type="match status" value="1"/>
</dbReference>
<dbReference type="PROSITE" id="PS51627">
    <property type="entry name" value="SAM_MT_TRM11"/>
    <property type="match status" value="1"/>
</dbReference>
<accession>Q12463</accession>
<accession>D6W1U4</accession>
<comment type="function">
    <text evidence="4">Catalytic subunit of an S-adenosyl-L-methionine-dependent tRNA methyltransferase complex that mediates the methylation of the guanosine nucleotide at position 10 (m2G10) in tRNAs.</text>
</comment>
<comment type="catalytic activity">
    <reaction evidence="4">
        <text>guanosine(10) in tRNA + S-adenosyl-L-methionine = N(2)-methylguanosine(10) in tRNA + S-adenosyl-L-homocysteine + H(+)</text>
        <dbReference type="Rhea" id="RHEA:43128"/>
        <dbReference type="Rhea" id="RHEA-COMP:10355"/>
        <dbReference type="Rhea" id="RHEA-COMP:10357"/>
        <dbReference type="ChEBI" id="CHEBI:15378"/>
        <dbReference type="ChEBI" id="CHEBI:57856"/>
        <dbReference type="ChEBI" id="CHEBI:59789"/>
        <dbReference type="ChEBI" id="CHEBI:74269"/>
        <dbReference type="ChEBI" id="CHEBI:74481"/>
        <dbReference type="EC" id="2.1.1.214"/>
    </reaction>
    <physiologicalReaction direction="left-to-right" evidence="5">
        <dbReference type="Rhea" id="RHEA:43129"/>
    </physiologicalReaction>
</comment>
<comment type="subunit">
    <text evidence="4">Interacts with TRM112.</text>
</comment>
<comment type="interaction">
    <interactant intactId="EBI-30471">
        <id>Q12463</id>
    </interactant>
    <interactant intactId="EBI-28520">
        <id>P53738</id>
        <label>TRM112</label>
    </interactant>
    <organismsDiffer>false</organismsDiffer>
    <experiments>5</experiments>
</comment>
<comment type="subcellular location">
    <subcellularLocation>
        <location evidence="2 4">Cytoplasm</location>
    </subcellularLocation>
</comment>
<comment type="miscellaneous">
    <text evidence="3">Present with 2020 molecules/cell in log phase SD medium.</text>
</comment>
<comment type="similarity">
    <text evidence="1">Belongs to the class I-like SAM-binding methyltransferase superfamily. TRM11 methyltransferase family.</text>
</comment>
<gene>
    <name type="primary">TRM11</name>
    <name type="ordered locus">YOL124C</name>
</gene>
<proteinExistence type="evidence at protein level"/>
<reference key="1">
    <citation type="journal article" date="1996" name="Yeast">
        <title>Sequence analysis of a 13.4 kbp fragment from the left arm of chromosome XV reveals a malate dehydrogenase gene, a putative Ser/Thr protein kinase, the ribosomal L25 gene and four new open reading frames.</title>
        <authorList>
            <person name="Casamayor A."/>
            <person name="Khalid H."/>
            <person name="Balcells L."/>
            <person name="Aldea M."/>
            <person name="Casas C."/>
            <person name="Herrero E."/>
            <person name="Arino J."/>
        </authorList>
    </citation>
    <scope>NUCLEOTIDE SEQUENCE [GENOMIC DNA]</scope>
    <source>
        <strain>ATCC 96604 / S288c / FY1679</strain>
    </source>
</reference>
<reference key="2">
    <citation type="journal article" date="1997" name="Nature">
        <title>The nucleotide sequence of Saccharomyces cerevisiae chromosome XV.</title>
        <authorList>
            <person name="Dujon B."/>
            <person name="Albermann K."/>
            <person name="Aldea M."/>
            <person name="Alexandraki D."/>
            <person name="Ansorge W."/>
            <person name="Arino J."/>
            <person name="Benes V."/>
            <person name="Bohn C."/>
            <person name="Bolotin-Fukuhara M."/>
            <person name="Bordonne R."/>
            <person name="Boyer J."/>
            <person name="Camasses A."/>
            <person name="Casamayor A."/>
            <person name="Casas C."/>
            <person name="Cheret G."/>
            <person name="Cziepluch C."/>
            <person name="Daignan-Fornier B."/>
            <person name="Dang V.-D."/>
            <person name="de Haan M."/>
            <person name="Delius H."/>
            <person name="Durand P."/>
            <person name="Fairhead C."/>
            <person name="Feldmann H."/>
            <person name="Gaillon L."/>
            <person name="Galisson F."/>
            <person name="Gamo F.-J."/>
            <person name="Gancedo C."/>
            <person name="Goffeau A."/>
            <person name="Goulding S.E."/>
            <person name="Grivell L.A."/>
            <person name="Habbig B."/>
            <person name="Hand N.J."/>
            <person name="Hani J."/>
            <person name="Hattenhorst U."/>
            <person name="Hebling U."/>
            <person name="Hernando Y."/>
            <person name="Herrero E."/>
            <person name="Heumann K."/>
            <person name="Hiesel R."/>
            <person name="Hilger F."/>
            <person name="Hofmann B."/>
            <person name="Hollenberg C.P."/>
            <person name="Hughes B."/>
            <person name="Jauniaux J.-C."/>
            <person name="Kalogeropoulos A."/>
            <person name="Katsoulou C."/>
            <person name="Kordes E."/>
            <person name="Lafuente M.J."/>
            <person name="Landt O."/>
            <person name="Louis E.J."/>
            <person name="Maarse A.C."/>
            <person name="Madania A."/>
            <person name="Mannhaupt G."/>
            <person name="Marck C."/>
            <person name="Martin R.P."/>
            <person name="Mewes H.-W."/>
            <person name="Michaux G."/>
            <person name="Paces V."/>
            <person name="Parle-McDermott A.G."/>
            <person name="Pearson B.M."/>
            <person name="Perrin A."/>
            <person name="Pettersson B."/>
            <person name="Poch O."/>
            <person name="Pohl T.M."/>
            <person name="Poirey R."/>
            <person name="Portetelle D."/>
            <person name="Pujol A."/>
            <person name="Purnelle B."/>
            <person name="Ramezani Rad M."/>
            <person name="Rechmann S."/>
            <person name="Schwager C."/>
            <person name="Schweizer M."/>
            <person name="Sor F."/>
            <person name="Sterky F."/>
            <person name="Tarassov I.A."/>
            <person name="Teodoru C."/>
            <person name="Tettelin H."/>
            <person name="Thierry A."/>
            <person name="Tobiasch E."/>
            <person name="Tzermia M."/>
            <person name="Uhlen M."/>
            <person name="Unseld M."/>
            <person name="Valens M."/>
            <person name="Vandenbol M."/>
            <person name="Vetter I."/>
            <person name="Vlcek C."/>
            <person name="Voet M."/>
            <person name="Volckaert G."/>
            <person name="Voss H."/>
            <person name="Wambutt R."/>
            <person name="Wedler H."/>
            <person name="Wiemann S."/>
            <person name="Winsor B."/>
            <person name="Wolfe K.H."/>
            <person name="Zollner A."/>
            <person name="Zumstein E."/>
            <person name="Kleine K."/>
        </authorList>
    </citation>
    <scope>NUCLEOTIDE SEQUENCE [LARGE SCALE GENOMIC DNA]</scope>
    <source>
        <strain>ATCC 204508 / S288c</strain>
    </source>
</reference>
<reference key="3">
    <citation type="journal article" date="2014" name="G3 (Bethesda)">
        <title>The reference genome sequence of Saccharomyces cerevisiae: Then and now.</title>
        <authorList>
            <person name="Engel S.R."/>
            <person name="Dietrich F.S."/>
            <person name="Fisk D.G."/>
            <person name="Binkley G."/>
            <person name="Balakrishnan R."/>
            <person name="Costanzo M.C."/>
            <person name="Dwight S.S."/>
            <person name="Hitz B.C."/>
            <person name="Karra K."/>
            <person name="Nash R.S."/>
            <person name="Weng S."/>
            <person name="Wong E.D."/>
            <person name="Lloyd P."/>
            <person name="Skrzypek M.S."/>
            <person name="Miyasato S.R."/>
            <person name="Simison M."/>
            <person name="Cherry J.M."/>
        </authorList>
    </citation>
    <scope>GENOME REANNOTATION</scope>
    <source>
        <strain>ATCC 204508 / S288c</strain>
    </source>
</reference>
<reference key="4">
    <citation type="journal article" date="2003" name="Nature">
        <title>Global analysis of protein localization in budding yeast.</title>
        <authorList>
            <person name="Huh W.-K."/>
            <person name="Falvo J.V."/>
            <person name="Gerke L.C."/>
            <person name="Carroll A.S."/>
            <person name="Howson R.W."/>
            <person name="Weissman J.S."/>
            <person name="O'Shea E.K."/>
        </authorList>
    </citation>
    <scope>SUBCELLULAR LOCATION [LARGE SCALE ANALYSIS]</scope>
</reference>
<reference key="5">
    <citation type="journal article" date="2003" name="Nature">
        <title>Global analysis of protein expression in yeast.</title>
        <authorList>
            <person name="Ghaemmaghami S."/>
            <person name="Huh W.-K."/>
            <person name="Bower K."/>
            <person name="Howson R.W."/>
            <person name="Belle A."/>
            <person name="Dephoure N."/>
            <person name="O'Shea E.K."/>
            <person name="Weissman J.S."/>
        </authorList>
    </citation>
    <scope>LEVEL OF PROTEIN EXPRESSION [LARGE SCALE ANALYSIS]</scope>
</reference>
<reference key="6">
    <citation type="journal article" date="2005" name="Mol. Cell. Biol.">
        <title>Trm11p and Trm112p are both required for the formation of 2-methylguanosine at position 10 in yeast tRNA.</title>
        <authorList>
            <person name="Purushothaman S.K."/>
            <person name="Bujnicki J.M."/>
            <person name="Grosjean H."/>
            <person name="Lapeyre B."/>
        </authorList>
    </citation>
    <scope>FUNCTION</scope>
    <scope>CATALYTIC ACTIVITY</scope>
    <scope>INTERACTION WITH TRM112</scope>
    <scope>SUBCELLULAR LOCATION</scope>
    <scope>MUTAGENESIS OF ASP-215 AND ASP-291</scope>
</reference>
<name>TRM11_YEAST</name>
<feature type="chain" id="PRO_0000270922" description="tRNA (guanine(10)-N(2))-methyltransferase">
    <location>
        <begin position="1"/>
        <end position="433"/>
    </location>
</feature>
<feature type="mutagenesis site" description="Abolishes activity." evidence="4">
    <original>D</original>
    <variation>A</variation>
    <location>
        <position position="215"/>
    </location>
</feature>
<feature type="mutagenesis site" description="Abolishes activity." evidence="4">
    <original>D</original>
    <variation>A</variation>
    <location>
        <position position="291"/>
    </location>
</feature>
<organism>
    <name type="scientific">Saccharomyces cerevisiae (strain ATCC 204508 / S288c)</name>
    <name type="common">Baker's yeast</name>
    <dbReference type="NCBI Taxonomy" id="559292"/>
    <lineage>
        <taxon>Eukaryota</taxon>
        <taxon>Fungi</taxon>
        <taxon>Dikarya</taxon>
        <taxon>Ascomycota</taxon>
        <taxon>Saccharomycotina</taxon>
        <taxon>Saccharomycetes</taxon>
        <taxon>Saccharomycetales</taxon>
        <taxon>Saccharomycetaceae</taxon>
        <taxon>Saccharomyces</taxon>
    </lineage>
</organism>
<evidence type="ECO:0000255" key="1">
    <source>
        <dbReference type="PROSITE-ProRule" id="PRU00959"/>
    </source>
</evidence>
<evidence type="ECO:0000269" key="2">
    <source>
    </source>
</evidence>
<evidence type="ECO:0000269" key="3">
    <source>
    </source>
</evidence>
<evidence type="ECO:0000269" key="4">
    <source>
    </source>
</evidence>
<evidence type="ECO:0000305" key="5">
    <source>
    </source>
</evidence>
<protein>
    <recommendedName>
        <fullName evidence="5">tRNA (guanine(10)-N(2))-methyltransferase</fullName>
        <ecNumber evidence="4">2.1.1.214</ecNumber>
    </recommendedName>
    <alternativeName>
        <fullName>tRNA [Gm10] methyltransferase</fullName>
    </alternativeName>
    <alternativeName>
        <fullName>tRNA guanosine-2'-O-methyltransferase TRM11</fullName>
    </alternativeName>
    <alternativeName>
        <fullName>tRNA methylase 11</fullName>
    </alternativeName>
</protein>